<gene>
    <name type="primary">tdrd1</name>
    <name type="ORF">im:7155161</name>
</gene>
<comment type="function">
    <text evidence="1">Plays a central role during spermatogenesis by participating in the repression transposable elements and preventing their mobilization, which is essential for the germline integrity. Acts via the piRNA metabolic process, which mediates the repression of transposable elements during meiosis by forming complexes composed of piRNAs and Piwi proteins and governs the methylation and subsequent repression of transposons. Required for the localization of Piwi proteins to the meiotic nuage. Involved in the piRNA metabolic process by ensuring the entry of correct transcripts into the normal piRNA pool and limiting the entry of cellular transcripts into the piRNA pathway. May act by allowing the recruitment of piRNA biogenesis or loading factors that ensure the correct entry of transcripts and piRNAs into Piwi proteins (By similarity).</text>
</comment>
<comment type="interaction">
    <interactant intactId="EBI-7011788">
        <id>Q58EK5</id>
    </interactant>
    <interactant intactId="EBI-7011759">
        <id>Q8UVX0</id>
        <label>piwil1</label>
    </interactant>
    <organismsDiffer>false</organismsDiffer>
    <experiments>3</experiments>
</comment>
<comment type="interaction">
    <interactant intactId="EBI-7011788">
        <id>Q58EK5</id>
    </interactant>
    <interactant intactId="EBI-7011808">
        <id>A2CEI6</id>
        <label>piwil2</label>
    </interactant>
    <organismsDiffer>false</organismsDiffer>
    <experiments>9</experiments>
</comment>
<comment type="subcellular location">
    <subcellularLocation>
        <location evidence="1">Cytoplasm</location>
    </subcellularLocation>
    <text evidence="1">Component of the meiotic nuage, also named P granule, a germ-cell-specific organelle required to repress transposon activity during meiosis.</text>
</comment>
<comment type="similarity">
    <text evidence="5">Belongs to the TDRD1 family.</text>
</comment>
<organism>
    <name type="scientific">Danio rerio</name>
    <name type="common">Zebrafish</name>
    <name type="synonym">Brachydanio rerio</name>
    <dbReference type="NCBI Taxonomy" id="7955"/>
    <lineage>
        <taxon>Eukaryota</taxon>
        <taxon>Metazoa</taxon>
        <taxon>Chordata</taxon>
        <taxon>Craniata</taxon>
        <taxon>Vertebrata</taxon>
        <taxon>Euteleostomi</taxon>
        <taxon>Actinopterygii</taxon>
        <taxon>Neopterygii</taxon>
        <taxon>Teleostei</taxon>
        <taxon>Ostariophysi</taxon>
        <taxon>Cypriniformes</taxon>
        <taxon>Danionidae</taxon>
        <taxon>Danioninae</taxon>
        <taxon>Danio</taxon>
    </lineage>
</organism>
<sequence length="1175" mass="129042">MNPAFAQPMMRPNLPLRRPATGPSSLSPRGPAPAIYEERLLASDVLDGPKIDTMRKDISQNCGDVLSSPQTAVSMMGQVVKLCNYCSHQGNLRCTRCKKTCYCSVACQTQDWIAHRHVCKPSIPEVTSEKPKESKAVPYANGLGGTQAKEISVDAQPKRIYRRDLHKKVVSKGSEIKGTVIDLRNPGMFSIHCQCEEMIESLKKITQQLQKTYCSSFAQEYKPEVGELCAVKFSLDQNWYRAEIQAVDVARKTAGVFYIDFGNEENVALDHIRPLSENIDAVPPFALQCCIAGVKPLTGSWTGECCIAVRQLIAGKSLTFTVLDIMNDGDLLAVDSLVSTLGKHVSTFLIDQSYAIKEDVPVKTQTEHSISSLLTASFENFKRFSGGKNENSEARPPEPLTQGVGDSFTAVVTHLQSPSEILCQKLENASIIQQLQMNLRVHCSNTAASDDFRPAPGTVCCSLFSEDNQWYRAKVLAYSSEDRVCVGYIDFGNSEEVELNRLRPISKELLALATQAIPCSLAGIKSLTDTWSDEAVLMLKHLVCNRFIRVEILGKKDGRALVSMIDESSDPQASVTELLVNMGFAAIESVETKKNEPDPATSTEIPLSQPVVEKLEWTGAELPFDGQKVELVISTLKSLDEFYCYNYSKTDEHTLTEMSFELMKHCESERAPFTPIVGEPCCALFTGDARWYRAMVLEVCGEGKARVCFVDYGNSCEVDAAHLKAITQSLLKLPFQAIRCWLAGVEPVEGQWKKEAMLRFQALCAGQPLSGKVLSITEKGYGMELESAGQTVASVLISEHLAKPYGQVRQPPQIQPAKPASQIEDLPSLKPIDQNPSVEEPLKVSSKGAATTPEDLPVSSGCFPLNWKTLELSCSGTFQPRVAAVISPSLFYIMNPGQVNVEGLKAVMTDVAKYCSKQPVPNQCHPLPGASCCAQFSGDKNWYRAVVLEVTTKHAHVIYSDYGNMETVPLSSILPITKELLQHPFQIVRCALTGKEHFPVVWPTEVLELFGIQLSGGVLASFQGFDGTSNLLTLTQQSGQSDRDINSIILGALQKGQIKPSSKLPANVNEEKKDVEQKQTQPISSNKAVEQTLSTNVEKPALDDQTLPLSVSLKHEEPENMSKTKTAEECTSTPDTVSSIESSHAAQSCCCQELKQKMDRIEELVLLLVKQVGSR</sequence>
<protein>
    <recommendedName>
        <fullName>Tudor domain-containing protein 1</fullName>
    </recommendedName>
</protein>
<reference key="1">
    <citation type="journal article" date="2013" name="Nature">
        <title>The zebrafish reference genome sequence and its relationship to the human genome.</title>
        <authorList>
            <person name="Howe K."/>
            <person name="Clark M.D."/>
            <person name="Torroja C.F."/>
            <person name="Torrance J."/>
            <person name="Berthelot C."/>
            <person name="Muffato M."/>
            <person name="Collins J.E."/>
            <person name="Humphray S."/>
            <person name="McLaren K."/>
            <person name="Matthews L."/>
            <person name="McLaren S."/>
            <person name="Sealy I."/>
            <person name="Caccamo M."/>
            <person name="Churcher C."/>
            <person name="Scott C."/>
            <person name="Barrett J.C."/>
            <person name="Koch R."/>
            <person name="Rauch G.J."/>
            <person name="White S."/>
            <person name="Chow W."/>
            <person name="Kilian B."/>
            <person name="Quintais L.T."/>
            <person name="Guerra-Assuncao J.A."/>
            <person name="Zhou Y."/>
            <person name="Gu Y."/>
            <person name="Yen J."/>
            <person name="Vogel J.H."/>
            <person name="Eyre T."/>
            <person name="Redmond S."/>
            <person name="Banerjee R."/>
            <person name="Chi J."/>
            <person name="Fu B."/>
            <person name="Langley E."/>
            <person name="Maguire S.F."/>
            <person name="Laird G.K."/>
            <person name="Lloyd D."/>
            <person name="Kenyon E."/>
            <person name="Donaldson S."/>
            <person name="Sehra H."/>
            <person name="Almeida-King J."/>
            <person name="Loveland J."/>
            <person name="Trevanion S."/>
            <person name="Jones M."/>
            <person name="Quail M."/>
            <person name="Willey D."/>
            <person name="Hunt A."/>
            <person name="Burton J."/>
            <person name="Sims S."/>
            <person name="McLay K."/>
            <person name="Plumb B."/>
            <person name="Davis J."/>
            <person name="Clee C."/>
            <person name="Oliver K."/>
            <person name="Clark R."/>
            <person name="Riddle C."/>
            <person name="Elliot D."/>
            <person name="Threadgold G."/>
            <person name="Harden G."/>
            <person name="Ware D."/>
            <person name="Begum S."/>
            <person name="Mortimore B."/>
            <person name="Kerry G."/>
            <person name="Heath P."/>
            <person name="Phillimore B."/>
            <person name="Tracey A."/>
            <person name="Corby N."/>
            <person name="Dunn M."/>
            <person name="Johnson C."/>
            <person name="Wood J."/>
            <person name="Clark S."/>
            <person name="Pelan S."/>
            <person name="Griffiths G."/>
            <person name="Smith M."/>
            <person name="Glithero R."/>
            <person name="Howden P."/>
            <person name="Barker N."/>
            <person name="Lloyd C."/>
            <person name="Stevens C."/>
            <person name="Harley J."/>
            <person name="Holt K."/>
            <person name="Panagiotidis G."/>
            <person name="Lovell J."/>
            <person name="Beasley H."/>
            <person name="Henderson C."/>
            <person name="Gordon D."/>
            <person name="Auger K."/>
            <person name="Wright D."/>
            <person name="Collins J."/>
            <person name="Raisen C."/>
            <person name="Dyer L."/>
            <person name="Leung K."/>
            <person name="Robertson L."/>
            <person name="Ambridge K."/>
            <person name="Leongamornlert D."/>
            <person name="McGuire S."/>
            <person name="Gilderthorp R."/>
            <person name="Griffiths C."/>
            <person name="Manthravadi D."/>
            <person name="Nichol S."/>
            <person name="Barker G."/>
            <person name="Whitehead S."/>
            <person name="Kay M."/>
            <person name="Brown J."/>
            <person name="Murnane C."/>
            <person name="Gray E."/>
            <person name="Humphries M."/>
            <person name="Sycamore N."/>
            <person name="Barker D."/>
            <person name="Saunders D."/>
            <person name="Wallis J."/>
            <person name="Babbage A."/>
            <person name="Hammond S."/>
            <person name="Mashreghi-Mohammadi M."/>
            <person name="Barr L."/>
            <person name="Martin S."/>
            <person name="Wray P."/>
            <person name="Ellington A."/>
            <person name="Matthews N."/>
            <person name="Ellwood M."/>
            <person name="Woodmansey R."/>
            <person name="Clark G."/>
            <person name="Cooper J."/>
            <person name="Tromans A."/>
            <person name="Grafham D."/>
            <person name="Skuce C."/>
            <person name="Pandian R."/>
            <person name="Andrews R."/>
            <person name="Harrison E."/>
            <person name="Kimberley A."/>
            <person name="Garnett J."/>
            <person name="Fosker N."/>
            <person name="Hall R."/>
            <person name="Garner P."/>
            <person name="Kelly D."/>
            <person name="Bird C."/>
            <person name="Palmer S."/>
            <person name="Gehring I."/>
            <person name="Berger A."/>
            <person name="Dooley C.M."/>
            <person name="Ersan-Urun Z."/>
            <person name="Eser C."/>
            <person name="Geiger H."/>
            <person name="Geisler M."/>
            <person name="Karotki L."/>
            <person name="Kirn A."/>
            <person name="Konantz J."/>
            <person name="Konantz M."/>
            <person name="Oberlander M."/>
            <person name="Rudolph-Geiger S."/>
            <person name="Teucke M."/>
            <person name="Lanz C."/>
            <person name="Raddatz G."/>
            <person name="Osoegawa K."/>
            <person name="Zhu B."/>
            <person name="Rapp A."/>
            <person name="Widaa S."/>
            <person name="Langford C."/>
            <person name="Yang F."/>
            <person name="Schuster S.C."/>
            <person name="Carter N.P."/>
            <person name="Harrow J."/>
            <person name="Ning Z."/>
            <person name="Herrero J."/>
            <person name="Searle S.M."/>
            <person name="Enright A."/>
            <person name="Geisler R."/>
            <person name="Plasterk R.H."/>
            <person name="Lee C."/>
            <person name="Westerfield M."/>
            <person name="de Jong P.J."/>
            <person name="Zon L.I."/>
            <person name="Postlethwait J.H."/>
            <person name="Nusslein-Volhard C."/>
            <person name="Hubbard T.J."/>
            <person name="Roest Crollius H."/>
            <person name="Rogers J."/>
            <person name="Stemple D.L."/>
        </authorList>
    </citation>
    <scope>NUCLEOTIDE SEQUENCE [LARGE SCALE GENOMIC DNA]</scope>
    <source>
        <strain>Tuebingen</strain>
    </source>
</reference>
<reference key="2">
    <citation type="submission" date="2005-03" db="EMBL/GenBank/DDBJ databases">
        <authorList>
            <consortium name="NIH - Zebrafish Gene Collection (ZGC) project"/>
        </authorList>
    </citation>
    <scope>NUCLEOTIDE SEQUENCE [LARGE SCALE MRNA] OF 691-1175</scope>
    <source>
        <tissue>Embryo</tissue>
    </source>
</reference>
<keyword id="KW-0963">Cytoplasm</keyword>
<keyword id="KW-0217">Developmental protein</keyword>
<keyword id="KW-0221">Differentiation</keyword>
<keyword id="KW-0469">Meiosis</keyword>
<keyword id="KW-0479">Metal-binding</keyword>
<keyword id="KW-1185">Reference proteome</keyword>
<keyword id="KW-0677">Repeat</keyword>
<keyword id="KW-0943">RNA-mediated gene silencing</keyword>
<keyword id="KW-0862">Zinc</keyword>
<keyword id="KW-0863">Zinc-finger</keyword>
<accession>Q58EK5</accession>
<evidence type="ECO:0000250" key="1"/>
<evidence type="ECO:0000255" key="2">
    <source>
        <dbReference type="PROSITE-ProRule" id="PRU00134"/>
    </source>
</evidence>
<evidence type="ECO:0000255" key="3">
    <source>
        <dbReference type="PROSITE-ProRule" id="PRU00211"/>
    </source>
</evidence>
<evidence type="ECO:0000256" key="4">
    <source>
        <dbReference type="SAM" id="MobiDB-lite"/>
    </source>
</evidence>
<evidence type="ECO:0000305" key="5"/>
<proteinExistence type="evidence at protein level"/>
<name>TDRD1_DANRE</name>
<dbReference type="EMBL" id="CR932360">
    <property type="status" value="NOT_ANNOTATED_CDS"/>
    <property type="molecule type" value="Genomic_DNA"/>
</dbReference>
<dbReference type="EMBL" id="BC091863">
    <property type="protein sequence ID" value="AAH91863.1"/>
    <property type="molecule type" value="mRNA"/>
</dbReference>
<dbReference type="SMR" id="Q58EK5"/>
<dbReference type="FunCoup" id="Q58EK5">
    <property type="interactions" value="1282"/>
</dbReference>
<dbReference type="IntAct" id="Q58EK5">
    <property type="interactions" value="95"/>
</dbReference>
<dbReference type="MINT" id="Q58EK5"/>
<dbReference type="STRING" id="7955.ENSDARP00000127267"/>
<dbReference type="PaxDb" id="7955-ENSDARP00000127267"/>
<dbReference type="AGR" id="ZFIN:ZDB-GENE-070803-1"/>
<dbReference type="ZFIN" id="ZDB-GENE-070803-1">
    <property type="gene designation" value="tdrd1"/>
</dbReference>
<dbReference type="eggNOG" id="KOG2039">
    <property type="taxonomic scope" value="Eukaryota"/>
</dbReference>
<dbReference type="InParanoid" id="Q58EK5"/>
<dbReference type="PhylomeDB" id="Q58EK5"/>
<dbReference type="PRO" id="PR:Q58EK5"/>
<dbReference type="Proteomes" id="UP000000437">
    <property type="component" value="Unplaced"/>
</dbReference>
<dbReference type="GO" id="GO:0005737">
    <property type="term" value="C:cytoplasm"/>
    <property type="evidence" value="ECO:0000250"/>
    <property type="project" value="UniProtKB"/>
</dbReference>
<dbReference type="GO" id="GO:0043186">
    <property type="term" value="C:P granule"/>
    <property type="evidence" value="ECO:0000250"/>
    <property type="project" value="UniProtKB"/>
</dbReference>
<dbReference type="GO" id="GO:0071546">
    <property type="term" value="C:pi-body"/>
    <property type="evidence" value="ECO:0000250"/>
    <property type="project" value="UniProtKB"/>
</dbReference>
<dbReference type="GO" id="GO:0034584">
    <property type="term" value="F:piRNA binding"/>
    <property type="evidence" value="ECO:0000314"/>
    <property type="project" value="ZFIN"/>
</dbReference>
<dbReference type="GO" id="GO:0008270">
    <property type="term" value="F:zinc ion binding"/>
    <property type="evidence" value="ECO:0007669"/>
    <property type="project" value="UniProtKB-KW"/>
</dbReference>
<dbReference type="GO" id="GO:0007281">
    <property type="term" value="P:germ cell development"/>
    <property type="evidence" value="ECO:0000250"/>
    <property type="project" value="UniProtKB"/>
</dbReference>
<dbReference type="GO" id="GO:0051321">
    <property type="term" value="P:meiotic cell cycle"/>
    <property type="evidence" value="ECO:0007669"/>
    <property type="project" value="UniProtKB-KW"/>
</dbReference>
<dbReference type="GO" id="GO:0030719">
    <property type="term" value="P:P granule organization"/>
    <property type="evidence" value="ECO:0000315"/>
    <property type="project" value="ZFIN"/>
</dbReference>
<dbReference type="GO" id="GO:0034587">
    <property type="term" value="P:piRNA processing"/>
    <property type="evidence" value="ECO:0000250"/>
    <property type="project" value="UniProtKB"/>
</dbReference>
<dbReference type="GO" id="GO:0007283">
    <property type="term" value="P:spermatogenesis"/>
    <property type="evidence" value="ECO:0000250"/>
    <property type="project" value="UniProtKB"/>
</dbReference>
<dbReference type="GO" id="GO:0141196">
    <property type="term" value="P:transposable element silencing by piRNA-mediated DNA methylation"/>
    <property type="evidence" value="ECO:0000250"/>
    <property type="project" value="UniProtKB"/>
</dbReference>
<dbReference type="CDD" id="cd20408">
    <property type="entry name" value="Tudor_TDRD1_rpt1"/>
    <property type="match status" value="1"/>
</dbReference>
<dbReference type="CDD" id="cd20409">
    <property type="entry name" value="Tudor_TDRD1_rpt2"/>
    <property type="match status" value="1"/>
</dbReference>
<dbReference type="CDD" id="cd20410">
    <property type="entry name" value="Tudor_TDRD1_rpt3"/>
    <property type="match status" value="1"/>
</dbReference>
<dbReference type="CDD" id="cd20411">
    <property type="entry name" value="Tudor_TDRD1_rpt4"/>
    <property type="match status" value="1"/>
</dbReference>
<dbReference type="FunFam" id="2.30.30.140:FF:000018">
    <property type="entry name" value="Serine/threonine-protein kinase 31"/>
    <property type="match status" value="3"/>
</dbReference>
<dbReference type="FunFam" id="2.30.30.140:FF:000048">
    <property type="entry name" value="Tudor domain containing 1"/>
    <property type="match status" value="1"/>
</dbReference>
<dbReference type="FunFam" id="6.10.140.2220:FF:000011">
    <property type="entry name" value="Tudor domain containing 1"/>
    <property type="match status" value="1"/>
</dbReference>
<dbReference type="Gene3D" id="2.30.30.140">
    <property type="match status" value="4"/>
</dbReference>
<dbReference type="Gene3D" id="2.40.50.90">
    <property type="match status" value="3"/>
</dbReference>
<dbReference type="Gene3D" id="6.10.140.2220">
    <property type="match status" value="1"/>
</dbReference>
<dbReference type="InterPro" id="IPR035437">
    <property type="entry name" value="SNase_OB-fold_sf"/>
</dbReference>
<dbReference type="InterPro" id="IPR002999">
    <property type="entry name" value="Tudor"/>
</dbReference>
<dbReference type="InterPro" id="IPR050621">
    <property type="entry name" value="Tudor_domain_containing"/>
</dbReference>
<dbReference type="InterPro" id="IPR047376">
    <property type="entry name" value="Tudor_TDRD1_rpt1"/>
</dbReference>
<dbReference type="InterPro" id="IPR047377">
    <property type="entry name" value="Tudor_TDRD1_rpt2"/>
</dbReference>
<dbReference type="InterPro" id="IPR047378">
    <property type="entry name" value="Tudor_TDRD1_rpt3"/>
</dbReference>
<dbReference type="InterPro" id="IPR002893">
    <property type="entry name" value="Znf_MYND"/>
</dbReference>
<dbReference type="PANTHER" id="PTHR22948">
    <property type="entry name" value="TUDOR DOMAIN CONTAINING PROTEIN"/>
    <property type="match status" value="1"/>
</dbReference>
<dbReference type="PANTHER" id="PTHR22948:SF72">
    <property type="entry name" value="TUDOR DOMAIN-CONTAINING PROTEIN"/>
    <property type="match status" value="1"/>
</dbReference>
<dbReference type="Pfam" id="PF00567">
    <property type="entry name" value="TUDOR"/>
    <property type="match status" value="4"/>
</dbReference>
<dbReference type="Pfam" id="PF01753">
    <property type="entry name" value="zf-MYND"/>
    <property type="match status" value="1"/>
</dbReference>
<dbReference type="SMART" id="SM00333">
    <property type="entry name" value="TUDOR"/>
    <property type="match status" value="4"/>
</dbReference>
<dbReference type="SUPFAM" id="SSF144232">
    <property type="entry name" value="HIT/MYND zinc finger-like"/>
    <property type="match status" value="1"/>
</dbReference>
<dbReference type="SUPFAM" id="SSF63748">
    <property type="entry name" value="Tudor/PWWP/MBT"/>
    <property type="match status" value="4"/>
</dbReference>
<dbReference type="PROSITE" id="PS50304">
    <property type="entry name" value="TUDOR"/>
    <property type="match status" value="4"/>
</dbReference>
<dbReference type="PROSITE" id="PS01360">
    <property type="entry name" value="ZF_MYND_1"/>
    <property type="match status" value="1"/>
</dbReference>
<dbReference type="PROSITE" id="PS50865">
    <property type="entry name" value="ZF_MYND_2"/>
    <property type="match status" value="1"/>
</dbReference>
<feature type="chain" id="PRO_0000367315" description="Tudor domain-containing protein 1">
    <location>
        <begin position="1"/>
        <end position="1175"/>
    </location>
</feature>
<feature type="domain" description="Tudor 1" evidence="3">
    <location>
        <begin position="222"/>
        <end position="282"/>
    </location>
</feature>
<feature type="domain" description="Tudor 2" evidence="3">
    <location>
        <begin position="453"/>
        <end position="512"/>
    </location>
</feature>
<feature type="domain" description="Tudor 3" evidence="3">
    <location>
        <begin position="674"/>
        <end position="733"/>
    </location>
</feature>
<feature type="domain" description="Tudor 4" evidence="3">
    <location>
        <begin position="925"/>
        <end position="983"/>
    </location>
</feature>
<feature type="zinc finger region" description="MYND-type" evidence="2">
    <location>
        <begin position="83"/>
        <end position="119"/>
    </location>
</feature>
<feature type="region of interest" description="Disordered" evidence="4">
    <location>
        <begin position="1"/>
        <end position="32"/>
    </location>
</feature>
<feature type="region of interest" description="Disordered" evidence="4">
    <location>
        <begin position="827"/>
        <end position="852"/>
    </location>
</feature>
<feature type="region of interest" description="Disordered" evidence="4">
    <location>
        <begin position="1060"/>
        <end position="1089"/>
    </location>
</feature>
<feature type="region of interest" description="Disordered" evidence="4">
    <location>
        <begin position="1115"/>
        <end position="1136"/>
    </location>
</feature>
<feature type="compositionally biased region" description="Low complexity" evidence="4">
    <location>
        <begin position="8"/>
        <end position="19"/>
    </location>
</feature>
<feature type="compositionally biased region" description="Polar residues" evidence="4">
    <location>
        <begin position="1078"/>
        <end position="1089"/>
    </location>
</feature>
<feature type="compositionally biased region" description="Basic and acidic residues" evidence="4">
    <location>
        <begin position="1115"/>
        <end position="1128"/>
    </location>
</feature>
<feature type="binding site" evidence="2">
    <location>
        <position position="83"/>
    </location>
    <ligand>
        <name>Zn(2+)</name>
        <dbReference type="ChEBI" id="CHEBI:29105"/>
        <label>1</label>
    </ligand>
</feature>
<feature type="binding site" evidence="2">
    <location>
        <position position="86"/>
    </location>
    <ligand>
        <name>Zn(2+)</name>
        <dbReference type="ChEBI" id="CHEBI:29105"/>
        <label>1</label>
    </ligand>
</feature>
<feature type="binding site" evidence="2">
    <location>
        <position position="94"/>
    </location>
    <ligand>
        <name>Zn(2+)</name>
        <dbReference type="ChEBI" id="CHEBI:29105"/>
        <label>2</label>
    </ligand>
</feature>
<feature type="binding site" evidence="2">
    <location>
        <position position="97"/>
    </location>
    <ligand>
        <name>Zn(2+)</name>
        <dbReference type="ChEBI" id="CHEBI:29105"/>
        <label>2</label>
    </ligand>
</feature>
<feature type="binding site" evidence="2">
    <location>
        <position position="103"/>
    </location>
    <ligand>
        <name>Zn(2+)</name>
        <dbReference type="ChEBI" id="CHEBI:29105"/>
        <label>1</label>
    </ligand>
</feature>
<feature type="binding site" evidence="2">
    <location>
        <position position="107"/>
    </location>
    <ligand>
        <name>Zn(2+)</name>
        <dbReference type="ChEBI" id="CHEBI:29105"/>
        <label>1</label>
    </ligand>
</feature>
<feature type="binding site" evidence="2">
    <location>
        <position position="115"/>
    </location>
    <ligand>
        <name>Zn(2+)</name>
        <dbReference type="ChEBI" id="CHEBI:29105"/>
        <label>2</label>
    </ligand>
</feature>
<feature type="binding site" evidence="2">
    <location>
        <position position="119"/>
    </location>
    <ligand>
        <name>Zn(2+)</name>
        <dbReference type="ChEBI" id="CHEBI:29105"/>
        <label>2</label>
    </ligand>
</feature>
<feature type="sequence conflict" description="In Ref. 2; AAH91863." evidence="5" ref="2">
    <original>W</original>
    <variation>G</variation>
    <location>
        <position position="691"/>
    </location>
</feature>
<feature type="sequence conflict" description="In Ref. 2; AAH91863." evidence="5" ref="2">
    <original>V</original>
    <variation>M</variation>
    <location>
        <position position="748"/>
    </location>
</feature>
<feature type="sequence conflict" description="In Ref. 2; AAH91863." evidence="5" ref="2">
    <original>P</original>
    <variation>Q</variation>
    <location>
        <position position="836"/>
    </location>
</feature>
<feature type="sequence conflict" description="In Ref. 2; AAH91863." evidence="5" ref="2">
    <original>S</original>
    <variation>P</variation>
    <location>
        <position position="1132"/>
    </location>
</feature>